<evidence type="ECO:0000255" key="1"/>
<evidence type="ECO:0000305" key="2"/>
<protein>
    <recommendedName>
        <fullName>Uncharacterized protein YdhI</fullName>
    </recommendedName>
</protein>
<sequence length="78" mass="8891">MKFMLNATGLPLQDLVFGASVYFPPFFKAFAFGFVIWLVVHRLLRGWIYAGDIWHPLLMDLSLFAICVCLALAILIAW</sequence>
<proteinExistence type="predicted"/>
<keyword id="KW-1003">Cell membrane</keyword>
<keyword id="KW-0472">Membrane</keyword>
<keyword id="KW-1185">Reference proteome</keyword>
<keyword id="KW-0812">Transmembrane</keyword>
<keyword id="KW-1133">Transmembrane helix</keyword>
<accession>P64471</accession>
<accession>P76184</accession>
<accession>Q2MB68</accession>
<dbReference type="EMBL" id="U00096">
    <property type="protein sequence ID" value="AAC74715.1"/>
    <property type="molecule type" value="Genomic_DNA"/>
</dbReference>
<dbReference type="EMBL" id="AP009048">
    <property type="protein sequence ID" value="BAE76488.1"/>
    <property type="molecule type" value="Genomic_DNA"/>
</dbReference>
<dbReference type="PIR" id="E64921">
    <property type="entry name" value="E64921"/>
</dbReference>
<dbReference type="RefSeq" id="NP_416160.1">
    <property type="nucleotide sequence ID" value="NC_000913.3"/>
</dbReference>
<dbReference type="RefSeq" id="WP_000670998.1">
    <property type="nucleotide sequence ID" value="NZ_STEB01000003.1"/>
</dbReference>
<dbReference type="SMR" id="P64471"/>
<dbReference type="BioGRID" id="4260259">
    <property type="interactions" value="14"/>
</dbReference>
<dbReference type="FunCoup" id="P64471">
    <property type="interactions" value="37"/>
</dbReference>
<dbReference type="STRING" id="511145.b1643"/>
<dbReference type="PaxDb" id="511145-b1643"/>
<dbReference type="EnsemblBacteria" id="AAC74715">
    <property type="protein sequence ID" value="AAC74715"/>
    <property type="gene ID" value="b1643"/>
</dbReference>
<dbReference type="GeneID" id="947559"/>
<dbReference type="KEGG" id="ecj:JW1635"/>
<dbReference type="KEGG" id="eco:b1643"/>
<dbReference type="PATRIC" id="fig|1411691.4.peg.616"/>
<dbReference type="EchoBASE" id="EB3701"/>
<dbReference type="eggNOG" id="ENOG5032YWB">
    <property type="taxonomic scope" value="Bacteria"/>
</dbReference>
<dbReference type="HOGENOM" id="CLU_178515_0_0_6"/>
<dbReference type="InParanoid" id="P64471"/>
<dbReference type="OMA" id="YSGEIWH"/>
<dbReference type="BioCyc" id="EcoCyc:G6883-MONOMER"/>
<dbReference type="PRO" id="PR:P64471"/>
<dbReference type="Proteomes" id="UP000000625">
    <property type="component" value="Chromosome"/>
</dbReference>
<dbReference type="GO" id="GO:0005886">
    <property type="term" value="C:plasma membrane"/>
    <property type="evidence" value="ECO:0007669"/>
    <property type="project" value="UniProtKB-SubCell"/>
</dbReference>
<dbReference type="InterPro" id="IPR012451">
    <property type="entry name" value="DUF1656"/>
</dbReference>
<dbReference type="Pfam" id="PF07869">
    <property type="entry name" value="DUF1656"/>
    <property type="match status" value="1"/>
</dbReference>
<reference key="1">
    <citation type="journal article" date="1997" name="Science">
        <title>The complete genome sequence of Escherichia coli K-12.</title>
        <authorList>
            <person name="Blattner F.R."/>
            <person name="Plunkett G. III"/>
            <person name="Bloch C.A."/>
            <person name="Perna N.T."/>
            <person name="Burland V."/>
            <person name="Riley M."/>
            <person name="Collado-Vides J."/>
            <person name="Glasner J.D."/>
            <person name="Rode C.K."/>
            <person name="Mayhew G.F."/>
            <person name="Gregor J."/>
            <person name="Davis N.W."/>
            <person name="Kirkpatrick H.A."/>
            <person name="Goeden M.A."/>
            <person name="Rose D.J."/>
            <person name="Mau B."/>
            <person name="Shao Y."/>
        </authorList>
    </citation>
    <scope>NUCLEOTIDE SEQUENCE [LARGE SCALE GENOMIC DNA]</scope>
    <source>
        <strain>K12 / MG1655 / ATCC 47076</strain>
    </source>
</reference>
<reference key="2">
    <citation type="journal article" date="2006" name="Mol. Syst. Biol.">
        <title>Highly accurate genome sequences of Escherichia coli K-12 strains MG1655 and W3110.</title>
        <authorList>
            <person name="Hayashi K."/>
            <person name="Morooka N."/>
            <person name="Yamamoto Y."/>
            <person name="Fujita K."/>
            <person name="Isono K."/>
            <person name="Choi S."/>
            <person name="Ohtsubo E."/>
            <person name="Baba T."/>
            <person name="Wanner B.L."/>
            <person name="Mori H."/>
            <person name="Horiuchi T."/>
        </authorList>
    </citation>
    <scope>NUCLEOTIDE SEQUENCE [LARGE SCALE GENOMIC DNA]</scope>
    <source>
        <strain>K12 / W3110 / ATCC 27325 / DSM 5911</strain>
    </source>
</reference>
<organism>
    <name type="scientific">Escherichia coli (strain K12)</name>
    <dbReference type="NCBI Taxonomy" id="83333"/>
    <lineage>
        <taxon>Bacteria</taxon>
        <taxon>Pseudomonadati</taxon>
        <taxon>Pseudomonadota</taxon>
        <taxon>Gammaproteobacteria</taxon>
        <taxon>Enterobacterales</taxon>
        <taxon>Enterobacteriaceae</taxon>
        <taxon>Escherichia</taxon>
    </lineage>
</organism>
<comment type="subcellular location">
    <subcellularLocation>
        <location evidence="2">Cell membrane</location>
        <topology evidence="2">Multi-pass membrane protein</topology>
    </subcellularLocation>
</comment>
<name>YDHI_ECOLI</name>
<gene>
    <name type="primary">ydhI</name>
    <name type="ordered locus">b1643</name>
    <name type="ordered locus">JW1635</name>
</gene>
<feature type="chain" id="PRO_0000168975" description="Uncharacterized protein YdhI">
    <location>
        <begin position="1"/>
        <end position="78"/>
    </location>
</feature>
<feature type="transmembrane region" description="Helical" evidence="1">
    <location>
        <begin position="20"/>
        <end position="40"/>
    </location>
</feature>
<feature type="transmembrane region" description="Helical" evidence="1">
    <location>
        <begin position="57"/>
        <end position="77"/>
    </location>
</feature>